<gene>
    <name type="primary">CYP2A10</name>
</gene>
<name>CP2AA_RABIT</name>
<comment type="function">
    <text>Catalyzes the oxygenation of a variety of substrates, including ethanol and procarcinogens such as N-nitrosodiethylamine and phenacetin. Exhibits a high coumarin 7-hydroxylase activity. Converts also testosterone to androstenedione.</text>
</comment>
<comment type="catalytic activity">
    <reaction>
        <text>an organic molecule + reduced [NADPH--hemoprotein reductase] + O2 = an alcohol + oxidized [NADPH--hemoprotein reductase] + H2O + H(+)</text>
        <dbReference type="Rhea" id="RHEA:17149"/>
        <dbReference type="Rhea" id="RHEA-COMP:11964"/>
        <dbReference type="Rhea" id="RHEA-COMP:11965"/>
        <dbReference type="ChEBI" id="CHEBI:15377"/>
        <dbReference type="ChEBI" id="CHEBI:15378"/>
        <dbReference type="ChEBI" id="CHEBI:15379"/>
        <dbReference type="ChEBI" id="CHEBI:30879"/>
        <dbReference type="ChEBI" id="CHEBI:57618"/>
        <dbReference type="ChEBI" id="CHEBI:58210"/>
        <dbReference type="ChEBI" id="CHEBI:142491"/>
        <dbReference type="EC" id="1.14.14.1"/>
    </reaction>
</comment>
<comment type="cofactor">
    <cofactor evidence="1">
        <name>heme</name>
        <dbReference type="ChEBI" id="CHEBI:30413"/>
    </cofactor>
</comment>
<comment type="subcellular location">
    <subcellularLocation>
        <location>Endoplasmic reticulum membrane</location>
        <topology>Peripheral membrane protein</topology>
    </subcellularLocation>
    <subcellularLocation>
        <location>Microsome membrane</location>
        <topology>Peripheral membrane protein</topology>
    </subcellularLocation>
</comment>
<comment type="tissue specificity">
    <text>Expressed in liver and lung as well as in nasal tissues.</text>
</comment>
<comment type="similarity">
    <text evidence="3">Belongs to the cytochrome P450 family.</text>
</comment>
<protein>
    <recommendedName>
        <fullName>Cytochrome P450 2A10</fullName>
        <ecNumber>1.14.14.1</ecNumber>
    </recommendedName>
    <alternativeName>
        <fullName>CYPIIA10</fullName>
    </alternativeName>
    <alternativeName>
        <fullName>Cytochrome P450-IIA10</fullName>
    </alternativeName>
</protein>
<proteinExistence type="evidence at protein level"/>
<organism>
    <name type="scientific">Oryctolagus cuniculus</name>
    <name type="common">Rabbit</name>
    <dbReference type="NCBI Taxonomy" id="9986"/>
    <lineage>
        <taxon>Eukaryota</taxon>
        <taxon>Metazoa</taxon>
        <taxon>Chordata</taxon>
        <taxon>Craniata</taxon>
        <taxon>Vertebrata</taxon>
        <taxon>Euteleostomi</taxon>
        <taxon>Mammalia</taxon>
        <taxon>Eutheria</taxon>
        <taxon>Euarchontoglires</taxon>
        <taxon>Glires</taxon>
        <taxon>Lagomorpha</taxon>
        <taxon>Leporidae</taxon>
        <taxon>Oryctolagus</taxon>
    </lineage>
</organism>
<sequence length="494" mass="57190">MLASGLLLAALLACLTVMILLSVWRQRKLWGKLPPGPTPLPFIGNYLQLNTEQMYDSLMKISERYGPVFTIHLGPRRIVVLCGQEAVKEALVDQAEDFSGRGELATFDWLFKGYGVVFSSWERARPLRRFAISTLRDFGVGKRGIEERIQEEAGFLIEAFRDTRGAFIDPTFFLSRTVSNVISSIVFGDRFDYEDKEFLSLLRMMLGSFQFTATPTGQLYEMFYSVMKHLPGPQQQAFKELEGLRDFIAKKVERNQRTLDPNSPRDFIDSFLIRMQEEKKDPKSEFHMKNLVMTTLNLFFAGTETVSTTMRYGFLLLMKHPDVEAKVHEEIDRVIGRNRQPKFEDRAKMPYTEAVIHEIQRFTDMIPMGLAHRVTRDTKFRDFLLPKGAEVFPMLGSVLKDPKFFSKPREFYPQHFLDEKGQFKKSDAFMPFSVGKRYCLGEGLARMELFLFFTTIMQNFRFRSQQAPQDIDVSPKHVGFATIPRTYTMSFVPR</sequence>
<keyword id="KW-0007">Acetylation</keyword>
<keyword id="KW-0256">Endoplasmic reticulum</keyword>
<keyword id="KW-0349">Heme</keyword>
<keyword id="KW-0408">Iron</keyword>
<keyword id="KW-0472">Membrane</keyword>
<keyword id="KW-0479">Metal-binding</keyword>
<keyword id="KW-0492">Microsome</keyword>
<keyword id="KW-0503">Monooxygenase</keyword>
<keyword id="KW-0560">Oxidoreductase</keyword>
<keyword id="KW-1185">Reference proteome</keyword>
<accession>Q05555</accession>
<reference key="1">
    <citation type="journal article" date="1993" name="J. Biol. Chem.">
        <title>Isolation and heterologous expression of cloned cDNAs for two rabbit nasal microsomal proteins, CYP2A10 and CYP2A11, that are related to nasal microsomal cytochrome P450 form a.</title>
        <authorList>
            <person name="Peng H.-M."/>
            <person name="Ding X."/>
            <person name="Coon M.J."/>
        </authorList>
    </citation>
    <scope>NUCLEOTIDE SEQUENCE [MRNA]</scope>
    <source>
        <strain>New Zealand white</strain>
        <tissue>Nasal mucosa</tissue>
    </source>
</reference>
<reference key="2">
    <citation type="journal article" date="1994" name="Biochem. Biophys. Res. Commun.">
        <title>Structure-function analysis of CYP2A10 and CYP2A11, P450 cytochromes that differ in only eight amino acids but have strikingly different activities toward testosterone and coumarin.</title>
        <authorList>
            <person name="Ding X."/>
            <person name="Peng H.-M."/>
            <person name="Coon M.J."/>
        </authorList>
    </citation>
    <scope>CHARACTERIZATION</scope>
</reference>
<evidence type="ECO:0000250" key="1"/>
<evidence type="ECO:0000250" key="2">
    <source>
        <dbReference type="UniProtKB" id="Q64458"/>
    </source>
</evidence>
<evidence type="ECO:0000305" key="3"/>
<dbReference type="EC" id="1.14.14.1"/>
<dbReference type="EMBL" id="L10236">
    <property type="protein sequence ID" value="AAA31371.1"/>
    <property type="molecule type" value="mRNA"/>
</dbReference>
<dbReference type="PIR" id="A47494">
    <property type="entry name" value="A47494"/>
</dbReference>
<dbReference type="RefSeq" id="NP_001164520.1">
    <property type="nucleotide sequence ID" value="NM_001171049.1"/>
</dbReference>
<dbReference type="SMR" id="Q05555"/>
<dbReference type="FunCoup" id="Q05555">
    <property type="interactions" value="237"/>
</dbReference>
<dbReference type="STRING" id="9986.ENSOCUP00000005874"/>
<dbReference type="PaxDb" id="9986-ENSOCUP00000005874"/>
<dbReference type="GeneID" id="100328598"/>
<dbReference type="CTD" id="100328598"/>
<dbReference type="eggNOG" id="KOG0156">
    <property type="taxonomic scope" value="Eukaryota"/>
</dbReference>
<dbReference type="InParanoid" id="Q05555"/>
<dbReference type="Proteomes" id="UP000001811">
    <property type="component" value="Unplaced"/>
</dbReference>
<dbReference type="GO" id="GO:0005789">
    <property type="term" value="C:endoplasmic reticulum membrane"/>
    <property type="evidence" value="ECO:0007669"/>
    <property type="project" value="UniProtKB-SubCell"/>
</dbReference>
<dbReference type="GO" id="GO:0008392">
    <property type="term" value="F:arachidonate epoxygenase activity"/>
    <property type="evidence" value="ECO:0007669"/>
    <property type="project" value="TreeGrafter"/>
</dbReference>
<dbReference type="GO" id="GO:0020037">
    <property type="term" value="F:heme binding"/>
    <property type="evidence" value="ECO:0007669"/>
    <property type="project" value="InterPro"/>
</dbReference>
<dbReference type="GO" id="GO:0005506">
    <property type="term" value="F:iron ion binding"/>
    <property type="evidence" value="ECO:0007669"/>
    <property type="project" value="InterPro"/>
</dbReference>
<dbReference type="GO" id="GO:0016712">
    <property type="term" value="F:oxidoreductase activity, acting on paired donors, with incorporation or reduction of molecular oxygen, reduced flavin or flavoprotein as one donor, and incorporation of one atom of oxygen"/>
    <property type="evidence" value="ECO:0007669"/>
    <property type="project" value="UniProtKB-EC"/>
</dbReference>
<dbReference type="GO" id="GO:0009804">
    <property type="term" value="P:coumarin metabolic process"/>
    <property type="evidence" value="ECO:0007669"/>
    <property type="project" value="TreeGrafter"/>
</dbReference>
<dbReference type="GO" id="GO:0019373">
    <property type="term" value="P:epoxygenase P450 pathway"/>
    <property type="evidence" value="ECO:0007669"/>
    <property type="project" value="TreeGrafter"/>
</dbReference>
<dbReference type="GO" id="GO:0006805">
    <property type="term" value="P:xenobiotic metabolic process"/>
    <property type="evidence" value="ECO:0007669"/>
    <property type="project" value="TreeGrafter"/>
</dbReference>
<dbReference type="CDD" id="cd20668">
    <property type="entry name" value="CYP2A"/>
    <property type="match status" value="1"/>
</dbReference>
<dbReference type="FunFam" id="1.10.630.10:FF:000238">
    <property type="entry name" value="Cytochrome P450 2A6"/>
    <property type="match status" value="1"/>
</dbReference>
<dbReference type="Gene3D" id="1.10.630.10">
    <property type="entry name" value="Cytochrome P450"/>
    <property type="match status" value="1"/>
</dbReference>
<dbReference type="InterPro" id="IPR001128">
    <property type="entry name" value="Cyt_P450"/>
</dbReference>
<dbReference type="InterPro" id="IPR017972">
    <property type="entry name" value="Cyt_P450_CS"/>
</dbReference>
<dbReference type="InterPro" id="IPR002401">
    <property type="entry name" value="Cyt_P450_E_grp-I"/>
</dbReference>
<dbReference type="InterPro" id="IPR008067">
    <property type="entry name" value="Cyt_P450_E_grp-I_CYP2A-like"/>
</dbReference>
<dbReference type="InterPro" id="IPR036396">
    <property type="entry name" value="Cyt_P450_sf"/>
</dbReference>
<dbReference type="InterPro" id="IPR050182">
    <property type="entry name" value="Cytochrome_P450_fam2"/>
</dbReference>
<dbReference type="PANTHER" id="PTHR24300:SF180">
    <property type="entry name" value="CYTOCHROME P450 2A6"/>
    <property type="match status" value="1"/>
</dbReference>
<dbReference type="PANTHER" id="PTHR24300">
    <property type="entry name" value="CYTOCHROME P450 508A4-RELATED"/>
    <property type="match status" value="1"/>
</dbReference>
<dbReference type="Pfam" id="PF00067">
    <property type="entry name" value="p450"/>
    <property type="match status" value="1"/>
</dbReference>
<dbReference type="PRINTS" id="PR00463">
    <property type="entry name" value="EP450I"/>
</dbReference>
<dbReference type="PRINTS" id="PR01684">
    <property type="entry name" value="EP450ICYP2A"/>
</dbReference>
<dbReference type="PRINTS" id="PR00385">
    <property type="entry name" value="P450"/>
</dbReference>
<dbReference type="SUPFAM" id="SSF48264">
    <property type="entry name" value="Cytochrome P450"/>
    <property type="match status" value="1"/>
</dbReference>
<dbReference type="PROSITE" id="PS00086">
    <property type="entry name" value="CYTOCHROME_P450"/>
    <property type="match status" value="1"/>
</dbReference>
<feature type="chain" id="PRO_0000051673" description="Cytochrome P450 2A10">
    <location>
        <begin position="1"/>
        <end position="494"/>
    </location>
</feature>
<feature type="binding site" description="axial binding residue" evidence="1">
    <location>
        <position position="439"/>
    </location>
    <ligand>
        <name>heme</name>
        <dbReference type="ChEBI" id="CHEBI:30413"/>
    </ligand>
    <ligandPart>
        <name>Fe</name>
        <dbReference type="ChEBI" id="CHEBI:18248"/>
    </ligandPart>
</feature>
<feature type="modified residue" description="N6-acetyllysine" evidence="2">
    <location>
        <position position="379"/>
    </location>
</feature>